<reference key="1">
    <citation type="journal article" date="2000" name="Nature">
        <title>Complete genome sequence of Pseudomonas aeruginosa PAO1, an opportunistic pathogen.</title>
        <authorList>
            <person name="Stover C.K."/>
            <person name="Pham X.-Q.T."/>
            <person name="Erwin A.L."/>
            <person name="Mizoguchi S.D."/>
            <person name="Warrener P."/>
            <person name="Hickey M.J."/>
            <person name="Brinkman F.S.L."/>
            <person name="Hufnagle W.O."/>
            <person name="Kowalik D.J."/>
            <person name="Lagrou M."/>
            <person name="Garber R.L."/>
            <person name="Goltry L."/>
            <person name="Tolentino E."/>
            <person name="Westbrock-Wadman S."/>
            <person name="Yuan Y."/>
            <person name="Brody L.L."/>
            <person name="Coulter S.N."/>
            <person name="Folger K.R."/>
            <person name="Kas A."/>
            <person name="Larbig K."/>
            <person name="Lim R.M."/>
            <person name="Smith K.A."/>
            <person name="Spencer D.H."/>
            <person name="Wong G.K.-S."/>
            <person name="Wu Z."/>
            <person name="Paulsen I.T."/>
            <person name="Reizer J."/>
            <person name="Saier M.H. Jr."/>
            <person name="Hancock R.E.W."/>
            <person name="Lory S."/>
            <person name="Olson M.V."/>
        </authorList>
    </citation>
    <scope>NUCLEOTIDE SEQUENCE [LARGE SCALE GENOMIC DNA]</scope>
    <source>
        <strain>ATCC 15692 / DSM 22644 / CIP 104116 / JCM 14847 / LMG 12228 / 1C / PRS 101 / PAO1</strain>
    </source>
</reference>
<reference key="2">
    <citation type="journal article" date="1996" name="J. Bacteriol.">
        <title>The uvrB gene of Pseudomonas aeruginosa is not DNA damage inducible.</title>
        <authorList>
            <person name="Rivera E."/>
            <person name="Vila L."/>
            <person name="Barbe J."/>
        </authorList>
    </citation>
    <scope>NUCLEOTIDE SEQUENCE [GENOMIC DNA] OF 1-75</scope>
    <source>
        <strain>ATCC 15692 / DSM 22644 / CIP 104116 / JCM 14847 / LMG 12228 / 1C / PRS 101 / PAO1</strain>
    </source>
</reference>
<sequence>MSLFSAVEMAPRDPILGLNEAFNADTRPGKINLGVGVYYNEEGRIPLLRAVQAAEKARIEAHAPRGYLPIEGIAAYDQGVQKLLFGNESELLAAGRVVTTQAVGGTGALKLGADFLKRLLPDATVAISDPSWENHRALFEAAGFPVQNYRYYDAASNGVNRAGLLEDLNALPARSIVVLHACCHNPTGVDLELDDWKQVLDVLKAKGHVPFLDIAYQGFGNGIEEDAAAVRLFAQSGLSFFVSSSFSKSFSLYGERVGALSIVTESRDESARVLSQVKRVIRTNYSNPPTHGASVVSSVLNSPELRALWEQELGEMRDRIRDMRLAMVEQLAAHGAKRDFSFVGRQRGMFSYSGLTADQVERLKTEFGIYAVSTGRICVAALNKSNLETITKAIVQVL</sequence>
<comment type="catalytic activity">
    <reaction>
        <text>L-aspartate + 2-oxoglutarate = oxaloacetate + L-glutamate</text>
        <dbReference type="Rhea" id="RHEA:21824"/>
        <dbReference type="ChEBI" id="CHEBI:16452"/>
        <dbReference type="ChEBI" id="CHEBI:16810"/>
        <dbReference type="ChEBI" id="CHEBI:29985"/>
        <dbReference type="ChEBI" id="CHEBI:29991"/>
        <dbReference type="EC" id="2.6.1.1"/>
    </reaction>
</comment>
<comment type="cofactor">
    <cofactor evidence="1">
        <name>pyridoxal 5'-phosphate</name>
        <dbReference type="ChEBI" id="CHEBI:597326"/>
    </cofactor>
</comment>
<comment type="subunit">
    <text evidence="1">Homodimer.</text>
</comment>
<comment type="subcellular location">
    <subcellularLocation>
        <location>Cytoplasm</location>
    </subcellularLocation>
</comment>
<comment type="similarity">
    <text evidence="2">Belongs to the class-I pyridoxal-phosphate-dependent aminotransferase family.</text>
</comment>
<accession>P72173</accession>
<feature type="chain" id="PRO_0000123845" description="Aspartate aminotransferase">
    <location>
        <begin position="1"/>
        <end position="398"/>
    </location>
</feature>
<feature type="binding site" evidence="1">
    <location>
        <position position="36"/>
    </location>
    <ligand>
        <name>L-aspartate</name>
        <dbReference type="ChEBI" id="CHEBI:29991"/>
    </ligand>
</feature>
<feature type="binding site" evidence="1">
    <location>
        <position position="132"/>
    </location>
    <ligand>
        <name>L-aspartate</name>
        <dbReference type="ChEBI" id="CHEBI:29991"/>
    </ligand>
</feature>
<feature type="binding site" evidence="1">
    <location>
        <position position="185"/>
    </location>
    <ligand>
        <name>L-aspartate</name>
        <dbReference type="ChEBI" id="CHEBI:29991"/>
    </ligand>
</feature>
<feature type="binding site" evidence="1">
    <location>
        <position position="376"/>
    </location>
    <ligand>
        <name>L-aspartate</name>
        <dbReference type="ChEBI" id="CHEBI:29991"/>
    </ligand>
</feature>
<feature type="modified residue" description="N6-(pyridoxal phosphate)lysine" evidence="1">
    <location>
        <position position="248"/>
    </location>
</feature>
<protein>
    <recommendedName>
        <fullName>Aspartate aminotransferase</fullName>
        <shortName>AspAT</shortName>
        <ecNumber>2.6.1.1</ecNumber>
    </recommendedName>
    <alternativeName>
        <fullName>Transaminase A</fullName>
    </alternativeName>
</protein>
<name>AAT_PSEAE</name>
<organism>
    <name type="scientific">Pseudomonas aeruginosa (strain ATCC 15692 / DSM 22644 / CIP 104116 / JCM 14847 / LMG 12228 / 1C / PRS 101 / PAO1)</name>
    <dbReference type="NCBI Taxonomy" id="208964"/>
    <lineage>
        <taxon>Bacteria</taxon>
        <taxon>Pseudomonadati</taxon>
        <taxon>Pseudomonadota</taxon>
        <taxon>Gammaproteobacteria</taxon>
        <taxon>Pseudomonadales</taxon>
        <taxon>Pseudomonadaceae</taxon>
        <taxon>Pseudomonas</taxon>
    </lineage>
</organism>
<keyword id="KW-0032">Aminotransferase</keyword>
<keyword id="KW-0963">Cytoplasm</keyword>
<keyword id="KW-0663">Pyridoxal phosphate</keyword>
<keyword id="KW-1185">Reference proteome</keyword>
<keyword id="KW-0808">Transferase</keyword>
<dbReference type="EC" id="2.6.1.1"/>
<dbReference type="EMBL" id="AE004091">
    <property type="protein sequence ID" value="AAG06527.1"/>
    <property type="molecule type" value="Genomic_DNA"/>
</dbReference>
<dbReference type="EMBL" id="X93486">
    <property type="protein sequence ID" value="CAA63758.1"/>
    <property type="molecule type" value="Genomic_DNA"/>
</dbReference>
<dbReference type="PIR" id="B83252">
    <property type="entry name" value="B83252"/>
</dbReference>
<dbReference type="RefSeq" id="NP_251829.1">
    <property type="nucleotide sequence ID" value="NC_002516.2"/>
</dbReference>
<dbReference type="RefSeq" id="WP_003104588.1">
    <property type="nucleotide sequence ID" value="NZ_QZGE01000023.1"/>
</dbReference>
<dbReference type="SMR" id="P72173"/>
<dbReference type="FunCoup" id="P72173">
    <property type="interactions" value="322"/>
</dbReference>
<dbReference type="STRING" id="208964.PA3139"/>
<dbReference type="PaxDb" id="208964-PA3139"/>
<dbReference type="GeneID" id="882671"/>
<dbReference type="KEGG" id="pae:PA3139"/>
<dbReference type="PATRIC" id="fig|208964.12.peg.3291"/>
<dbReference type="PseudoCAP" id="PA3139"/>
<dbReference type="HOGENOM" id="CLU_032440_1_2_6"/>
<dbReference type="InParanoid" id="P72173"/>
<dbReference type="OrthoDB" id="9766445at2"/>
<dbReference type="PhylomeDB" id="P72173"/>
<dbReference type="BioCyc" id="PAER208964:G1FZ6-3199-MONOMER"/>
<dbReference type="Proteomes" id="UP000002438">
    <property type="component" value="Chromosome"/>
</dbReference>
<dbReference type="GO" id="GO:0005829">
    <property type="term" value="C:cytosol"/>
    <property type="evidence" value="ECO:0000318"/>
    <property type="project" value="GO_Central"/>
</dbReference>
<dbReference type="GO" id="GO:0042802">
    <property type="term" value="F:identical protein binding"/>
    <property type="evidence" value="ECO:0000318"/>
    <property type="project" value="GO_Central"/>
</dbReference>
<dbReference type="GO" id="GO:0004069">
    <property type="term" value="F:L-aspartate:2-oxoglutarate aminotransferase activity"/>
    <property type="evidence" value="ECO:0007669"/>
    <property type="project" value="UniProtKB-EC"/>
</dbReference>
<dbReference type="GO" id="GO:0004838">
    <property type="term" value="F:L-tyrosine-2-oxoglutarate transaminase activity"/>
    <property type="evidence" value="ECO:0000318"/>
    <property type="project" value="GO_Central"/>
</dbReference>
<dbReference type="GO" id="GO:0030170">
    <property type="term" value="F:pyridoxal phosphate binding"/>
    <property type="evidence" value="ECO:0000318"/>
    <property type="project" value="GO_Central"/>
</dbReference>
<dbReference type="GO" id="GO:0033585">
    <property type="term" value="P:L-phenylalanine biosynthetic process from chorismate via phenylpyruvate"/>
    <property type="evidence" value="ECO:0000318"/>
    <property type="project" value="GO_Central"/>
</dbReference>
<dbReference type="CDD" id="cd00609">
    <property type="entry name" value="AAT_like"/>
    <property type="match status" value="1"/>
</dbReference>
<dbReference type="FunFam" id="3.40.640.10:FF:000015">
    <property type="entry name" value="Aspartate aminotransferase"/>
    <property type="match status" value="1"/>
</dbReference>
<dbReference type="FunFam" id="3.90.1150.10:FF:000001">
    <property type="entry name" value="Aspartate aminotransferase"/>
    <property type="match status" value="1"/>
</dbReference>
<dbReference type="Gene3D" id="3.90.1150.10">
    <property type="entry name" value="Aspartate Aminotransferase, domain 1"/>
    <property type="match status" value="1"/>
</dbReference>
<dbReference type="Gene3D" id="3.40.640.10">
    <property type="entry name" value="Type I PLP-dependent aspartate aminotransferase-like (Major domain)"/>
    <property type="match status" value="1"/>
</dbReference>
<dbReference type="InterPro" id="IPR004839">
    <property type="entry name" value="Aminotransferase_I/II_large"/>
</dbReference>
<dbReference type="InterPro" id="IPR000796">
    <property type="entry name" value="Asp_trans"/>
</dbReference>
<dbReference type="InterPro" id="IPR004838">
    <property type="entry name" value="NHTrfase_class1_PyrdxlP-BS"/>
</dbReference>
<dbReference type="InterPro" id="IPR015424">
    <property type="entry name" value="PyrdxlP-dep_Trfase"/>
</dbReference>
<dbReference type="InterPro" id="IPR015421">
    <property type="entry name" value="PyrdxlP-dep_Trfase_major"/>
</dbReference>
<dbReference type="InterPro" id="IPR015422">
    <property type="entry name" value="PyrdxlP-dep_Trfase_small"/>
</dbReference>
<dbReference type="NCBIfam" id="NF006719">
    <property type="entry name" value="PRK09257.1"/>
    <property type="match status" value="1"/>
</dbReference>
<dbReference type="PANTHER" id="PTHR11879:SF37">
    <property type="entry name" value="AROMATIC-AMINO-ACID AMINOTRANSFERASE"/>
    <property type="match status" value="1"/>
</dbReference>
<dbReference type="PANTHER" id="PTHR11879">
    <property type="entry name" value="ASPARTATE AMINOTRANSFERASE"/>
    <property type="match status" value="1"/>
</dbReference>
<dbReference type="Pfam" id="PF00155">
    <property type="entry name" value="Aminotran_1_2"/>
    <property type="match status" value="1"/>
</dbReference>
<dbReference type="PRINTS" id="PR00799">
    <property type="entry name" value="TRANSAMINASE"/>
</dbReference>
<dbReference type="SUPFAM" id="SSF53383">
    <property type="entry name" value="PLP-dependent transferases"/>
    <property type="match status" value="1"/>
</dbReference>
<dbReference type="PROSITE" id="PS00105">
    <property type="entry name" value="AA_TRANSFER_CLASS_1"/>
    <property type="match status" value="1"/>
</dbReference>
<proteinExistence type="inferred from homology"/>
<evidence type="ECO:0000250" key="1"/>
<evidence type="ECO:0000305" key="2"/>
<gene>
    <name type="primary">aspC</name>
    <name type="ordered locus">PA3139</name>
</gene>